<organism>
    <name type="scientific">Homo sapiens</name>
    <name type="common">Human</name>
    <dbReference type="NCBI Taxonomy" id="9606"/>
    <lineage>
        <taxon>Eukaryota</taxon>
        <taxon>Metazoa</taxon>
        <taxon>Chordata</taxon>
        <taxon>Craniata</taxon>
        <taxon>Vertebrata</taxon>
        <taxon>Euteleostomi</taxon>
        <taxon>Mammalia</taxon>
        <taxon>Eutheria</taxon>
        <taxon>Euarchontoglires</taxon>
        <taxon>Primates</taxon>
        <taxon>Haplorrhini</taxon>
        <taxon>Catarrhini</taxon>
        <taxon>Hominidae</taxon>
        <taxon>Homo</taxon>
    </lineage>
</organism>
<name>CF298_HUMAN</name>
<comment type="function">
    <text evidence="3 4">Plays a role in motile cilium function, possibly by acting on outer dynein arm assembly (PubMed:24094744). Seems to be important for initiation rather than maintenance of cilium motility (By similarity). Required for correct positioning of the cilium at the apical cell surface, suggesting an additional role in the planar cell polarity (PCP) pathway (By similarity). May suppress canonical Wnt signaling activity (By similarity).</text>
</comment>
<comment type="subunit">
    <text evidence="5">Interacts with ZMYND10.</text>
</comment>
<comment type="interaction">
    <interactant intactId="EBI-7205010">
        <id>P57076</id>
    </interactant>
    <interactant intactId="EBI-5238811">
        <id>O00628</id>
        <label>PEX7</label>
    </interactant>
    <organismsDiffer>false</organismsDiffer>
    <experiments>3</experiments>
</comment>
<comment type="subcellular location">
    <subcellularLocation>
        <location evidence="5">Cytoplasm</location>
    </subcellularLocation>
    <subcellularLocation>
        <location evidence="1">Cytoplasm</location>
        <location evidence="1">Cytoskeleton</location>
        <location evidence="1">Cilium basal body</location>
    </subcellularLocation>
    <text evidence="2">Partially colocalized with SASS6 in cytoplasmic puncta, suggesting a centrosomal localization.</text>
</comment>
<comment type="disease" evidence="4">
    <disease id="DI-03936">
        <name>Ciliary dyskinesia, primary, 26</name>
        <acronym>CILD26</acronym>
        <description>A disorder characterized by abnormalities of motile cilia. Respiratory infections leading to chronic inflammation and bronchiectasis are recurrent, due to defects in the respiratory cilia. Patients may exhibit randomization of left-right body asymmetry and situs inversus, due to dysfunction of monocilia at the embryonic node. Primary ciliary dyskinesia associated with situs inversus is referred to as Kartagener syndrome.</description>
        <dbReference type="MIM" id="615500"/>
    </disease>
    <text>The disease is caused by variants affecting the gene represented in this entry. Cilia in nasal epithelia show the absence of both outer and inner dynein-arm components and complete paralysis.</text>
</comment>
<comment type="similarity">
    <text evidence="6">Belongs to the CFAP298 family.</text>
</comment>
<feature type="chain" id="PRO_0000079523" description="Cilia- and flagella-associated protein 298">
    <location>
        <begin position="1"/>
        <end position="290"/>
    </location>
</feature>
<feature type="modified residue" description="Phosphotyrosine" evidence="8">
    <location>
        <position position="264"/>
    </location>
</feature>
<feature type="sequence variant" id="VAR_070200" description="In dbSNP:rs753786167." evidence="4">
    <original>R</original>
    <variation>W</variation>
    <location>
        <position position="33"/>
    </location>
</feature>
<feature type="sequence variant" id="VAR_070201" description="In CILD26; uncertain significance; hypomorphic mutation; dbSNP:rs140727644." evidence="4">
    <original>D</original>
    <variation>G</variation>
    <location>
        <position position="141"/>
    </location>
</feature>
<feature type="sequence variant" id="VAR_070202" description="In dbSNP:rs540473945." evidence="4">
    <original>D</original>
    <variation>Y</variation>
    <location>
        <position position="173"/>
    </location>
</feature>
<feature type="sequence conflict" description="In Ref. 2; BAD97038." evidence="6" ref="2">
    <original>G</original>
    <variation>E</variation>
    <location>
        <position position="176"/>
    </location>
</feature>
<gene>
    <name evidence="7" type="primary">CFAP298</name>
    <name type="synonym">C21orf48</name>
    <name type="synonym">C21orf59</name>
</gene>
<dbReference type="EMBL" id="AF282851">
    <property type="protein sequence ID" value="AAG00496.1"/>
    <property type="molecule type" value="mRNA"/>
</dbReference>
<dbReference type="EMBL" id="AK223318">
    <property type="protein sequence ID" value="BAD97038.1"/>
    <property type="molecule type" value="mRNA"/>
</dbReference>
<dbReference type="EMBL" id="AP000275">
    <property type="status" value="NOT_ANNOTATED_CDS"/>
    <property type="molecule type" value="Genomic_DNA"/>
</dbReference>
<dbReference type="EMBL" id="BC000709">
    <property type="protein sequence ID" value="AAH00709.1"/>
    <property type="molecule type" value="mRNA"/>
</dbReference>
<dbReference type="CCDS" id="CCDS13617.1"/>
<dbReference type="RefSeq" id="NP_067077.1">
    <property type="nucleotide sequence ID" value="NM_021254.4"/>
</dbReference>
<dbReference type="BioGRID" id="121187">
    <property type="interactions" value="88"/>
</dbReference>
<dbReference type="CORUM" id="P57076"/>
<dbReference type="FunCoup" id="P57076">
    <property type="interactions" value="2392"/>
</dbReference>
<dbReference type="IntAct" id="P57076">
    <property type="interactions" value="69"/>
</dbReference>
<dbReference type="MINT" id="P57076"/>
<dbReference type="STRING" id="9606.ENSP00000290155"/>
<dbReference type="GlyGen" id="P57076">
    <property type="glycosylation" value="1 site, 1 O-linked glycan (1 site)"/>
</dbReference>
<dbReference type="iPTMnet" id="P57076"/>
<dbReference type="PhosphoSitePlus" id="P57076"/>
<dbReference type="BioMuta" id="C21orf59"/>
<dbReference type="DMDM" id="10719917"/>
<dbReference type="jPOST" id="P57076"/>
<dbReference type="MassIVE" id="P57076"/>
<dbReference type="PaxDb" id="9606-ENSP00000290155"/>
<dbReference type="PeptideAtlas" id="P57076"/>
<dbReference type="ProteomicsDB" id="56984"/>
<dbReference type="Pumba" id="P57076"/>
<dbReference type="Antibodypedia" id="6941">
    <property type="antibodies" value="194 antibodies from 19 providers"/>
</dbReference>
<dbReference type="DNASU" id="56683"/>
<dbReference type="Ensembl" id="ENST00000290155.8">
    <property type="protein sequence ID" value="ENSP00000290155.3"/>
    <property type="gene ID" value="ENSG00000159079.19"/>
</dbReference>
<dbReference type="GeneID" id="56683"/>
<dbReference type="KEGG" id="hsa:56683"/>
<dbReference type="MANE-Select" id="ENST00000290155.8">
    <property type="protein sequence ID" value="ENSP00000290155.3"/>
    <property type="RefSeq nucleotide sequence ID" value="NM_021254.4"/>
    <property type="RefSeq protein sequence ID" value="NP_067077.1"/>
</dbReference>
<dbReference type="UCSC" id="uc002yqc.4">
    <property type="organism name" value="human"/>
</dbReference>
<dbReference type="AGR" id="HGNC:1301"/>
<dbReference type="CTD" id="56683"/>
<dbReference type="DisGeNET" id="56683"/>
<dbReference type="GeneCards" id="CFAP298"/>
<dbReference type="GeneReviews" id="CFAP298"/>
<dbReference type="HGNC" id="HGNC:1301">
    <property type="gene designation" value="CFAP298"/>
</dbReference>
<dbReference type="HPA" id="ENSG00000159079">
    <property type="expression patterns" value="Low tissue specificity"/>
</dbReference>
<dbReference type="MalaCards" id="CFAP298"/>
<dbReference type="MIM" id="615494">
    <property type="type" value="gene"/>
</dbReference>
<dbReference type="MIM" id="615500">
    <property type="type" value="phenotype"/>
</dbReference>
<dbReference type="neXtProt" id="NX_P57076"/>
<dbReference type="OpenTargets" id="ENSG00000159079"/>
<dbReference type="Orphanet" id="244">
    <property type="disease" value="Primary ciliary dyskinesia"/>
</dbReference>
<dbReference type="PharmGKB" id="PA25854"/>
<dbReference type="VEuPathDB" id="HostDB:ENSG00000159079"/>
<dbReference type="eggNOG" id="ENOG502QQ3Z">
    <property type="taxonomic scope" value="Eukaryota"/>
</dbReference>
<dbReference type="GeneTree" id="ENSGT00390000006278"/>
<dbReference type="HOGENOM" id="CLU_064854_0_0_1"/>
<dbReference type="InParanoid" id="P57076"/>
<dbReference type="OMA" id="YRKQEEW"/>
<dbReference type="OrthoDB" id="276065at2759"/>
<dbReference type="PAN-GO" id="P57076">
    <property type="GO annotations" value="0 GO annotations based on evolutionary models"/>
</dbReference>
<dbReference type="PhylomeDB" id="P57076"/>
<dbReference type="TreeFam" id="TF323482"/>
<dbReference type="PathwayCommons" id="P57076"/>
<dbReference type="SignaLink" id="P57076"/>
<dbReference type="BioGRID-ORCS" id="56683">
    <property type="hits" value="800 hits in 1138 CRISPR screens"/>
</dbReference>
<dbReference type="ChiTaRS" id="C21orf59">
    <property type="organism name" value="human"/>
</dbReference>
<dbReference type="GeneWiki" id="C21orf59"/>
<dbReference type="GenomeRNAi" id="56683"/>
<dbReference type="Pharos" id="P57076">
    <property type="development level" value="Tbio"/>
</dbReference>
<dbReference type="PRO" id="PR:P57076"/>
<dbReference type="Proteomes" id="UP000005640">
    <property type="component" value="Chromosome 21"/>
</dbReference>
<dbReference type="RNAct" id="P57076">
    <property type="molecule type" value="protein"/>
</dbReference>
<dbReference type="Bgee" id="ENSG00000159079">
    <property type="expression patterns" value="Expressed in right uterine tube and 108 other cell types or tissues"/>
</dbReference>
<dbReference type="ExpressionAtlas" id="P57076">
    <property type="expression patterns" value="baseline and differential"/>
</dbReference>
<dbReference type="GO" id="GO:0005813">
    <property type="term" value="C:centrosome"/>
    <property type="evidence" value="ECO:0000314"/>
    <property type="project" value="HPA"/>
</dbReference>
<dbReference type="GO" id="GO:0036064">
    <property type="term" value="C:ciliary basal body"/>
    <property type="evidence" value="ECO:0000314"/>
    <property type="project" value="HPA"/>
</dbReference>
<dbReference type="GO" id="GO:0005829">
    <property type="term" value="C:cytosol"/>
    <property type="evidence" value="ECO:0000314"/>
    <property type="project" value="HPA"/>
</dbReference>
<dbReference type="GO" id="GO:0043231">
    <property type="term" value="C:intracellular membrane-bounded organelle"/>
    <property type="evidence" value="ECO:0000314"/>
    <property type="project" value="HPA"/>
</dbReference>
<dbReference type="GO" id="GO:0005654">
    <property type="term" value="C:nucleoplasm"/>
    <property type="evidence" value="ECO:0000314"/>
    <property type="project" value="HPA"/>
</dbReference>
<dbReference type="GO" id="GO:0005634">
    <property type="term" value="C:nucleus"/>
    <property type="evidence" value="ECO:0007005"/>
    <property type="project" value="UniProtKB"/>
</dbReference>
<dbReference type="GO" id="GO:0060271">
    <property type="term" value="P:cilium assembly"/>
    <property type="evidence" value="ECO:0000315"/>
    <property type="project" value="UniProtKB"/>
</dbReference>
<dbReference type="GO" id="GO:0003352">
    <property type="term" value="P:regulation of cilium movement"/>
    <property type="evidence" value="ECO:0000315"/>
    <property type="project" value="UniProtKB"/>
</dbReference>
<dbReference type="InterPro" id="IPR021298">
    <property type="entry name" value="CFAP298"/>
</dbReference>
<dbReference type="PANTHER" id="PTHR13238:SF0">
    <property type="entry name" value="CILIA- AND FLAGELLA-ASSOCIATED PROTEIN 298"/>
    <property type="match status" value="1"/>
</dbReference>
<dbReference type="PANTHER" id="PTHR13238">
    <property type="entry name" value="PROTEIN C21ORF59"/>
    <property type="match status" value="1"/>
</dbReference>
<dbReference type="Pfam" id="PF11069">
    <property type="entry name" value="CFAP298"/>
    <property type="match status" value="1"/>
</dbReference>
<evidence type="ECO:0000250" key="1">
    <source>
        <dbReference type="UniProtKB" id="A0A1L8HCK2"/>
    </source>
</evidence>
<evidence type="ECO:0000250" key="2">
    <source>
        <dbReference type="UniProtKB" id="Q5U3Z0"/>
    </source>
</evidence>
<evidence type="ECO:0000250" key="3">
    <source>
        <dbReference type="UniProtKB" id="Q6DRC3"/>
    </source>
</evidence>
<evidence type="ECO:0000269" key="4">
    <source>
    </source>
</evidence>
<evidence type="ECO:0000269" key="5">
    <source>
    </source>
</evidence>
<evidence type="ECO:0000305" key="6"/>
<evidence type="ECO:0000312" key="7">
    <source>
        <dbReference type="HGNC" id="HGNC:1301"/>
    </source>
</evidence>
<evidence type="ECO:0007744" key="8">
    <source>
    </source>
</evidence>
<proteinExistence type="evidence at protein level"/>
<protein>
    <recommendedName>
        <fullName evidence="6">Cilia- and flagella-associated protein 298</fullName>
    </recommendedName>
    <alternativeName>
        <fullName evidence="6">Protein kurly homolog</fullName>
    </alternativeName>
</protein>
<keyword id="KW-0966">Cell projection</keyword>
<keyword id="KW-1186">Ciliopathy</keyword>
<keyword id="KW-0969">Cilium</keyword>
<keyword id="KW-0963">Cytoplasm</keyword>
<keyword id="KW-0206">Cytoskeleton</keyword>
<keyword id="KW-1012">Kartagener syndrome</keyword>
<keyword id="KW-0597">Phosphoprotein</keyword>
<keyword id="KW-0990">Primary ciliary dyskinesia</keyword>
<keyword id="KW-1267">Proteomics identification</keyword>
<keyword id="KW-1185">Reference proteome</keyword>
<sequence>MVLLHVKRGDESQFLLQAPGSTELEELTVQVARVYNGRLKVQRLCSEMEELAEHGIFLPPNMQGLTDDQIEELKLKDEWGEKCVPSGGAVFKKDDIGRRNGQAPNEKMKQVLKKTIEEAKAIISKKQVEAGVCVTMEMVKDALDQLRGAVMIVYPMGLPPYDPIRMEFENKEDLSGTQAGLNVIKEAEAQLWWAAKELRRTKKLSDYVGKNEKTKIIAKIQQRGQGAPAREPIISSEEQKQLMLYYHRRQEELKRLEENDDDAYLNSPWADNTALKRHFHGVKDIKWRPR</sequence>
<accession>P57076</accession>
<accession>Q53FH0</accession>
<reference key="1">
    <citation type="submission" date="2000-06" db="EMBL/GenBank/DDBJ databases">
        <authorList>
            <person name="Lutfalla G."/>
        </authorList>
    </citation>
    <scope>NUCLEOTIDE SEQUENCE [MRNA]</scope>
</reference>
<reference key="2">
    <citation type="submission" date="2005-04" db="EMBL/GenBank/DDBJ databases">
        <authorList>
            <person name="Suzuki Y."/>
            <person name="Sugano S."/>
            <person name="Totoki Y."/>
            <person name="Toyoda A."/>
            <person name="Takeda T."/>
            <person name="Sakaki Y."/>
            <person name="Tanaka A."/>
            <person name="Yokoyama S."/>
        </authorList>
    </citation>
    <scope>NUCLEOTIDE SEQUENCE [LARGE SCALE MRNA]</scope>
    <source>
        <tissue>Thymus</tissue>
    </source>
</reference>
<reference key="3">
    <citation type="journal article" date="2000" name="Nature">
        <title>The DNA sequence of human chromosome 21.</title>
        <authorList>
            <person name="Hattori M."/>
            <person name="Fujiyama A."/>
            <person name="Taylor T.D."/>
            <person name="Watanabe H."/>
            <person name="Yada T."/>
            <person name="Park H.-S."/>
            <person name="Toyoda A."/>
            <person name="Ishii K."/>
            <person name="Totoki Y."/>
            <person name="Choi D.-K."/>
            <person name="Groner Y."/>
            <person name="Soeda E."/>
            <person name="Ohki M."/>
            <person name="Takagi T."/>
            <person name="Sakaki Y."/>
            <person name="Taudien S."/>
            <person name="Blechschmidt K."/>
            <person name="Polley A."/>
            <person name="Menzel U."/>
            <person name="Delabar J."/>
            <person name="Kumpf K."/>
            <person name="Lehmann R."/>
            <person name="Patterson D."/>
            <person name="Reichwald K."/>
            <person name="Rump A."/>
            <person name="Schillhabel M."/>
            <person name="Schudy A."/>
            <person name="Zimmermann W."/>
            <person name="Rosenthal A."/>
            <person name="Kudoh J."/>
            <person name="Shibuya K."/>
            <person name="Kawasaki K."/>
            <person name="Asakawa S."/>
            <person name="Shintani A."/>
            <person name="Sasaki T."/>
            <person name="Nagamine K."/>
            <person name="Mitsuyama S."/>
            <person name="Antonarakis S.E."/>
            <person name="Minoshima S."/>
            <person name="Shimizu N."/>
            <person name="Nordsiek G."/>
            <person name="Hornischer K."/>
            <person name="Brandt P."/>
            <person name="Scharfe M."/>
            <person name="Schoen O."/>
            <person name="Desario A."/>
            <person name="Reichelt J."/>
            <person name="Kauer G."/>
            <person name="Bloecker H."/>
            <person name="Ramser J."/>
            <person name="Beck A."/>
            <person name="Klages S."/>
            <person name="Hennig S."/>
            <person name="Riesselmann L."/>
            <person name="Dagand E."/>
            <person name="Wehrmeyer S."/>
            <person name="Borzym K."/>
            <person name="Gardiner K."/>
            <person name="Nizetic D."/>
            <person name="Francis F."/>
            <person name="Lehrach H."/>
            <person name="Reinhardt R."/>
            <person name="Yaspo M.-L."/>
        </authorList>
    </citation>
    <scope>NUCLEOTIDE SEQUENCE [LARGE SCALE GENOMIC DNA]</scope>
</reference>
<reference key="4">
    <citation type="journal article" date="2004" name="Genome Res.">
        <title>The status, quality, and expansion of the NIH full-length cDNA project: the Mammalian Gene Collection (MGC).</title>
        <authorList>
            <consortium name="The MGC Project Team"/>
        </authorList>
    </citation>
    <scope>NUCLEOTIDE SEQUENCE [LARGE SCALE MRNA]</scope>
    <source>
        <tissue>Placenta</tissue>
    </source>
</reference>
<reference key="5">
    <citation type="journal article" date="2005" name="Nat. Biotechnol.">
        <title>Immunoaffinity profiling of tyrosine phosphorylation in cancer cells.</title>
        <authorList>
            <person name="Rush J."/>
            <person name="Moritz A."/>
            <person name="Lee K.A."/>
            <person name="Guo A."/>
            <person name="Goss V.L."/>
            <person name="Spek E.J."/>
            <person name="Zhang H."/>
            <person name="Zha X.-M."/>
            <person name="Polakiewicz R.D."/>
            <person name="Comb M.J."/>
        </authorList>
    </citation>
    <scope>PHOSPHORYLATION [LARGE SCALE ANALYSIS] AT TYR-264</scope>
    <scope>IDENTIFICATION BY MASS SPECTROMETRY [LARGE SCALE ANALYSIS]</scope>
</reference>
<reference key="6">
    <citation type="journal article" date="2013" name="Am. J. Hum. Genet.">
        <title>Zebrafish ciliopathy screen plus human mutational analysis identifies C21orf59 and CCDC65 defects as causing primary ciliary dyskinesia.</title>
        <authorList>
            <person name="Austin-Tse C."/>
            <person name="Halbritter J."/>
            <person name="Zariwala M.A."/>
            <person name="Gilberti R.M."/>
            <person name="Gee H.Y."/>
            <person name="Hellman N."/>
            <person name="Pathak N."/>
            <person name="Liu Y."/>
            <person name="Panizzi J.R."/>
            <person name="Patel-King R.S."/>
            <person name="Tritschler D."/>
            <person name="Bower R."/>
            <person name="O'Toole E."/>
            <person name="Porath J.D."/>
            <person name="Hurd T.W."/>
            <person name="Chaki M."/>
            <person name="Diaz K.A."/>
            <person name="Kohl S."/>
            <person name="Lovric S."/>
            <person name="Hwang D.Y."/>
            <person name="Braun D.A."/>
            <person name="Schueler M."/>
            <person name="Airik R."/>
            <person name="Otto E.A."/>
            <person name="Leigh M.W."/>
            <person name="Noone P.G."/>
            <person name="Carson J.L."/>
            <person name="Davis S.D."/>
            <person name="Pittman J.E."/>
            <person name="Ferkol T.W."/>
            <person name="Atkinson J.J."/>
            <person name="Olivier K.N."/>
            <person name="Sagel S.D."/>
            <person name="Dell S.D."/>
            <person name="Rosenfeld M."/>
            <person name="Milla C.E."/>
            <person name="Loges N.T."/>
            <person name="Omran H."/>
            <person name="Porter M.E."/>
            <person name="King S.M."/>
            <person name="Knowles M.R."/>
            <person name="Drummond I.A."/>
            <person name="Hildebrandt F."/>
        </authorList>
    </citation>
    <scope>FUNCTION</scope>
    <scope>INVOLVEMENT IN CILD26</scope>
    <scope>VARIANTS TRP-33; GLY-141 AND TYR-173</scope>
</reference>
<reference key="7">
    <citation type="journal article" date="2018" name="PLoS Genet.">
        <title>ZMYND10 stabilizes intermediate chain proteins in the cytoplasmic pre-assembly of dynein arms.</title>
        <authorList>
            <person name="Cho K.J."/>
            <person name="Noh S.H."/>
            <person name="Han S.M."/>
            <person name="Choi W.I."/>
            <person name="Kim H.Y."/>
            <person name="Yu S."/>
            <person name="Lee J.S."/>
            <person name="Rim J.H."/>
            <person name="Lee M.G."/>
            <person name="Hildebrandt F."/>
            <person name="Gee H.Y."/>
        </authorList>
    </citation>
    <scope>INTERACTION WITH ZMYND10</scope>
    <scope>SUBCELLULAR LOCATION</scope>
</reference>